<sequence length="315" mass="35574">MTTYDPSQKSLGKEKLSRIPVKIEATHTPLRKPDWIRIRLSTDSKVSQLKKLLRENHLVTVCEEASCPNLNECFGHGTATFMIMGDKCTRRCSFCDVGHGRPDPLDPEEPVNLANTVSIMSLRYVVITSVDRDDLRDGGAQHYAQCINAVREKNPGIKVEVLVPDFRGRMEKALDQLAQGLPDVFNHNIETAPRLYKQARPGADYPWSLALLQTFKKRFPGIPTKSGMMLGLGETREEVETVMRDLRQHEVDRLTLGQYLQPTRYHMPVDRYVTPQEFQELGELAKKLGFSNVASGPLVRSSYHADLQAQGERVS</sequence>
<organism>
    <name type="scientific">Coxiella burnetii (strain Dugway 5J108-111)</name>
    <dbReference type="NCBI Taxonomy" id="434922"/>
    <lineage>
        <taxon>Bacteria</taxon>
        <taxon>Pseudomonadati</taxon>
        <taxon>Pseudomonadota</taxon>
        <taxon>Gammaproteobacteria</taxon>
        <taxon>Legionellales</taxon>
        <taxon>Coxiellaceae</taxon>
        <taxon>Coxiella</taxon>
    </lineage>
</organism>
<dbReference type="EC" id="2.8.1.8" evidence="1"/>
<dbReference type="EMBL" id="CP000733">
    <property type="protein sequence ID" value="ABS77329.1"/>
    <property type="molecule type" value="Genomic_DNA"/>
</dbReference>
<dbReference type="RefSeq" id="WP_005770840.1">
    <property type="nucleotide sequence ID" value="NC_009727.1"/>
</dbReference>
<dbReference type="SMR" id="A9KFW5"/>
<dbReference type="KEGG" id="cbd:CBUD_1351"/>
<dbReference type="HOGENOM" id="CLU_033144_2_1_6"/>
<dbReference type="UniPathway" id="UPA00538">
    <property type="reaction ID" value="UER00593"/>
</dbReference>
<dbReference type="Proteomes" id="UP000008555">
    <property type="component" value="Chromosome"/>
</dbReference>
<dbReference type="GO" id="GO:0005737">
    <property type="term" value="C:cytoplasm"/>
    <property type="evidence" value="ECO:0007669"/>
    <property type="project" value="UniProtKB-SubCell"/>
</dbReference>
<dbReference type="GO" id="GO:0051539">
    <property type="term" value="F:4 iron, 4 sulfur cluster binding"/>
    <property type="evidence" value="ECO:0007669"/>
    <property type="project" value="UniProtKB-UniRule"/>
</dbReference>
<dbReference type="GO" id="GO:0016992">
    <property type="term" value="F:lipoate synthase activity"/>
    <property type="evidence" value="ECO:0007669"/>
    <property type="project" value="UniProtKB-UniRule"/>
</dbReference>
<dbReference type="GO" id="GO:0046872">
    <property type="term" value="F:metal ion binding"/>
    <property type="evidence" value="ECO:0007669"/>
    <property type="project" value="UniProtKB-KW"/>
</dbReference>
<dbReference type="FunFam" id="3.20.20.70:FF:000040">
    <property type="entry name" value="Lipoyl synthase"/>
    <property type="match status" value="1"/>
</dbReference>
<dbReference type="Gene3D" id="3.20.20.70">
    <property type="entry name" value="Aldolase class I"/>
    <property type="match status" value="1"/>
</dbReference>
<dbReference type="HAMAP" id="MF_00206">
    <property type="entry name" value="Lipoyl_synth"/>
    <property type="match status" value="1"/>
</dbReference>
<dbReference type="InterPro" id="IPR013785">
    <property type="entry name" value="Aldolase_TIM"/>
</dbReference>
<dbReference type="InterPro" id="IPR006638">
    <property type="entry name" value="Elp3/MiaA/NifB-like_rSAM"/>
</dbReference>
<dbReference type="InterPro" id="IPR003698">
    <property type="entry name" value="Lipoyl_synth"/>
</dbReference>
<dbReference type="InterPro" id="IPR007197">
    <property type="entry name" value="rSAM"/>
</dbReference>
<dbReference type="NCBIfam" id="TIGR00510">
    <property type="entry name" value="lipA"/>
    <property type="match status" value="1"/>
</dbReference>
<dbReference type="NCBIfam" id="NF004019">
    <property type="entry name" value="PRK05481.1"/>
    <property type="match status" value="1"/>
</dbReference>
<dbReference type="NCBIfam" id="NF009544">
    <property type="entry name" value="PRK12928.1"/>
    <property type="match status" value="1"/>
</dbReference>
<dbReference type="PANTHER" id="PTHR10949">
    <property type="entry name" value="LIPOYL SYNTHASE"/>
    <property type="match status" value="1"/>
</dbReference>
<dbReference type="PANTHER" id="PTHR10949:SF0">
    <property type="entry name" value="LIPOYL SYNTHASE, MITOCHONDRIAL"/>
    <property type="match status" value="1"/>
</dbReference>
<dbReference type="Pfam" id="PF04055">
    <property type="entry name" value="Radical_SAM"/>
    <property type="match status" value="1"/>
</dbReference>
<dbReference type="PIRSF" id="PIRSF005963">
    <property type="entry name" value="Lipoyl_synth"/>
    <property type="match status" value="1"/>
</dbReference>
<dbReference type="SFLD" id="SFLDF00271">
    <property type="entry name" value="lipoyl_synthase"/>
    <property type="match status" value="1"/>
</dbReference>
<dbReference type="SFLD" id="SFLDS00029">
    <property type="entry name" value="Radical_SAM"/>
    <property type="match status" value="1"/>
</dbReference>
<dbReference type="SMART" id="SM00729">
    <property type="entry name" value="Elp3"/>
    <property type="match status" value="1"/>
</dbReference>
<dbReference type="SUPFAM" id="SSF102114">
    <property type="entry name" value="Radical SAM enzymes"/>
    <property type="match status" value="1"/>
</dbReference>
<dbReference type="PROSITE" id="PS51918">
    <property type="entry name" value="RADICAL_SAM"/>
    <property type="match status" value="1"/>
</dbReference>
<gene>
    <name evidence="1" type="primary">lipA</name>
    <name type="ordered locus">CBUD_1351</name>
</gene>
<proteinExistence type="inferred from homology"/>
<feature type="chain" id="PRO_1000077953" description="Lipoyl synthase">
    <location>
        <begin position="1"/>
        <end position="315"/>
    </location>
</feature>
<feature type="domain" description="Radical SAM core" evidence="2">
    <location>
        <begin position="73"/>
        <end position="291"/>
    </location>
</feature>
<feature type="binding site" evidence="1">
    <location>
        <position position="62"/>
    </location>
    <ligand>
        <name>[4Fe-4S] cluster</name>
        <dbReference type="ChEBI" id="CHEBI:49883"/>
        <label>1</label>
    </ligand>
</feature>
<feature type="binding site" evidence="1">
    <location>
        <position position="67"/>
    </location>
    <ligand>
        <name>[4Fe-4S] cluster</name>
        <dbReference type="ChEBI" id="CHEBI:49883"/>
        <label>1</label>
    </ligand>
</feature>
<feature type="binding site" evidence="1">
    <location>
        <position position="73"/>
    </location>
    <ligand>
        <name>[4Fe-4S] cluster</name>
        <dbReference type="ChEBI" id="CHEBI:49883"/>
        <label>1</label>
    </ligand>
</feature>
<feature type="binding site" evidence="1">
    <location>
        <position position="88"/>
    </location>
    <ligand>
        <name>[4Fe-4S] cluster</name>
        <dbReference type="ChEBI" id="CHEBI:49883"/>
        <label>2</label>
        <note>4Fe-4S-S-AdoMet</note>
    </ligand>
</feature>
<feature type="binding site" evidence="1">
    <location>
        <position position="92"/>
    </location>
    <ligand>
        <name>[4Fe-4S] cluster</name>
        <dbReference type="ChEBI" id="CHEBI:49883"/>
        <label>2</label>
        <note>4Fe-4S-S-AdoMet</note>
    </ligand>
</feature>
<feature type="binding site" evidence="1">
    <location>
        <position position="95"/>
    </location>
    <ligand>
        <name>[4Fe-4S] cluster</name>
        <dbReference type="ChEBI" id="CHEBI:49883"/>
        <label>2</label>
        <note>4Fe-4S-S-AdoMet</note>
    </ligand>
</feature>
<feature type="binding site" evidence="1">
    <location>
        <position position="302"/>
    </location>
    <ligand>
        <name>[4Fe-4S] cluster</name>
        <dbReference type="ChEBI" id="CHEBI:49883"/>
        <label>1</label>
    </ligand>
</feature>
<protein>
    <recommendedName>
        <fullName evidence="1">Lipoyl synthase</fullName>
        <ecNumber evidence="1">2.8.1.8</ecNumber>
    </recommendedName>
    <alternativeName>
        <fullName evidence="1">Lip-syn</fullName>
        <shortName evidence="1">LS</shortName>
    </alternativeName>
    <alternativeName>
        <fullName evidence="1">Lipoate synthase</fullName>
    </alternativeName>
    <alternativeName>
        <fullName evidence="1">Lipoic acid synthase</fullName>
    </alternativeName>
    <alternativeName>
        <fullName evidence="1">Sulfur insertion protein LipA</fullName>
    </alternativeName>
</protein>
<reference key="1">
    <citation type="journal article" date="2009" name="Infect. Immun.">
        <title>Comparative genomics reveal extensive transposon-mediated genomic plasticity and diversity among potential effector proteins within the genus Coxiella.</title>
        <authorList>
            <person name="Beare P.A."/>
            <person name="Unsworth N."/>
            <person name="Andoh M."/>
            <person name="Voth D.E."/>
            <person name="Omsland A."/>
            <person name="Gilk S.D."/>
            <person name="Williams K.P."/>
            <person name="Sobral B.W."/>
            <person name="Kupko J.J. III"/>
            <person name="Porcella S.F."/>
            <person name="Samuel J.E."/>
            <person name="Heinzen R.A."/>
        </authorList>
    </citation>
    <scope>NUCLEOTIDE SEQUENCE [LARGE SCALE GENOMIC DNA]</scope>
    <source>
        <strain>Dugway 5J108-111</strain>
    </source>
</reference>
<evidence type="ECO:0000255" key="1">
    <source>
        <dbReference type="HAMAP-Rule" id="MF_00206"/>
    </source>
</evidence>
<evidence type="ECO:0000255" key="2">
    <source>
        <dbReference type="PROSITE-ProRule" id="PRU01266"/>
    </source>
</evidence>
<accession>A9KFW5</accession>
<comment type="function">
    <text evidence="1">Catalyzes the radical-mediated insertion of two sulfur atoms into the C-6 and C-8 positions of the octanoyl moiety bound to the lipoyl domains of lipoate-dependent enzymes, thereby converting the octanoylated domains into lipoylated derivatives.</text>
</comment>
<comment type="catalytic activity">
    <reaction evidence="1">
        <text>[[Fe-S] cluster scaffold protein carrying a second [4Fe-4S](2+) cluster] + N(6)-octanoyl-L-lysyl-[protein] + 2 oxidized [2Fe-2S]-[ferredoxin] + 2 S-adenosyl-L-methionine + 4 H(+) = [[Fe-S] cluster scaffold protein] + N(6)-[(R)-dihydrolipoyl]-L-lysyl-[protein] + 4 Fe(3+) + 2 hydrogen sulfide + 2 5'-deoxyadenosine + 2 L-methionine + 2 reduced [2Fe-2S]-[ferredoxin]</text>
        <dbReference type="Rhea" id="RHEA:16585"/>
        <dbReference type="Rhea" id="RHEA-COMP:9928"/>
        <dbReference type="Rhea" id="RHEA-COMP:10000"/>
        <dbReference type="Rhea" id="RHEA-COMP:10001"/>
        <dbReference type="Rhea" id="RHEA-COMP:10475"/>
        <dbReference type="Rhea" id="RHEA-COMP:14568"/>
        <dbReference type="Rhea" id="RHEA-COMP:14569"/>
        <dbReference type="ChEBI" id="CHEBI:15378"/>
        <dbReference type="ChEBI" id="CHEBI:17319"/>
        <dbReference type="ChEBI" id="CHEBI:29034"/>
        <dbReference type="ChEBI" id="CHEBI:29919"/>
        <dbReference type="ChEBI" id="CHEBI:33722"/>
        <dbReference type="ChEBI" id="CHEBI:33737"/>
        <dbReference type="ChEBI" id="CHEBI:33738"/>
        <dbReference type="ChEBI" id="CHEBI:57844"/>
        <dbReference type="ChEBI" id="CHEBI:59789"/>
        <dbReference type="ChEBI" id="CHEBI:78809"/>
        <dbReference type="ChEBI" id="CHEBI:83100"/>
        <dbReference type="EC" id="2.8.1.8"/>
    </reaction>
</comment>
<comment type="cofactor">
    <cofactor evidence="1">
        <name>[4Fe-4S] cluster</name>
        <dbReference type="ChEBI" id="CHEBI:49883"/>
    </cofactor>
    <text evidence="1">Binds 2 [4Fe-4S] clusters per subunit. One cluster is coordinated with 3 cysteines and an exchangeable S-adenosyl-L-methionine.</text>
</comment>
<comment type="pathway">
    <text evidence="1">Protein modification; protein lipoylation via endogenous pathway; protein N(6)-(lipoyl)lysine from octanoyl-[acyl-carrier-protein]: step 2/2.</text>
</comment>
<comment type="subcellular location">
    <subcellularLocation>
        <location evidence="1">Cytoplasm</location>
    </subcellularLocation>
</comment>
<comment type="similarity">
    <text evidence="1">Belongs to the radical SAM superfamily. Lipoyl synthase family.</text>
</comment>
<name>LIPA_COXBN</name>
<keyword id="KW-0004">4Fe-4S</keyword>
<keyword id="KW-0963">Cytoplasm</keyword>
<keyword id="KW-0408">Iron</keyword>
<keyword id="KW-0411">Iron-sulfur</keyword>
<keyword id="KW-0479">Metal-binding</keyword>
<keyword id="KW-0949">S-adenosyl-L-methionine</keyword>
<keyword id="KW-0808">Transferase</keyword>